<accession>P49209</accession>
<accession>Q9LDX2</accession>
<feature type="chain" id="PRO_0000131106" description="Large ribosomal subunit protein uL6z/uL6y">
    <location>
        <begin position="1"/>
        <end position="194"/>
    </location>
</feature>
<feature type="modified residue" description="Phosphothreonine" evidence="3">
    <location>
        <position position="75"/>
    </location>
</feature>
<feature type="sequence conflict" description="In Ref. 5; CAA79045." evidence="2" ref="5">
    <original>I</original>
    <variation>R</variation>
    <location>
        <position position="12"/>
    </location>
</feature>
<feature type="sequence conflict" description="In Ref. 1; CAA63024." evidence="2" ref="1">
    <original>A</original>
    <variation>V</variation>
    <location>
        <position position="71"/>
    </location>
</feature>
<feature type="sequence conflict" description="In Ref. 1; CAA63024." evidence="2" ref="1">
    <original>S</original>
    <variation>R</variation>
    <location>
        <position position="78"/>
    </location>
</feature>
<feature type="sequence conflict" description="In Ref. 1; CAA63024." evidence="2" ref="1">
    <original>A</original>
    <variation>V</variation>
    <location>
        <position position="106"/>
    </location>
</feature>
<feature type="sequence conflict" description="In Ref. 1; CAA63024." evidence="2" ref="1">
    <original>KS</original>
    <variation>SL</variation>
    <location>
        <begin position="113"/>
        <end position="114"/>
    </location>
</feature>
<reference key="1">
    <citation type="submission" date="1995-12" db="EMBL/GenBank/DDBJ databases">
        <authorList>
            <person name="Grellet F."/>
            <person name="Cooke R."/>
            <person name="Laudie M."/>
            <person name="Raynal M."/>
            <person name="Delseny M."/>
        </authorList>
    </citation>
    <scope>NUCLEOTIDE SEQUENCE [MRNA] (AT1G33140)</scope>
    <source>
        <strain>cv. Columbia</strain>
    </source>
</reference>
<reference key="2">
    <citation type="journal article" date="2000" name="Nature">
        <title>Sequence and analysis of chromosome 1 of the plant Arabidopsis thaliana.</title>
        <authorList>
            <person name="Theologis A."/>
            <person name="Ecker J.R."/>
            <person name="Palm C.J."/>
            <person name="Federspiel N.A."/>
            <person name="Kaul S."/>
            <person name="White O."/>
            <person name="Alonso J."/>
            <person name="Altafi H."/>
            <person name="Araujo R."/>
            <person name="Bowman C.L."/>
            <person name="Brooks S.Y."/>
            <person name="Buehler E."/>
            <person name="Chan A."/>
            <person name="Chao Q."/>
            <person name="Chen H."/>
            <person name="Cheuk R.F."/>
            <person name="Chin C.W."/>
            <person name="Chung M.K."/>
            <person name="Conn L."/>
            <person name="Conway A.B."/>
            <person name="Conway A.R."/>
            <person name="Creasy T.H."/>
            <person name="Dewar K."/>
            <person name="Dunn P."/>
            <person name="Etgu P."/>
            <person name="Feldblyum T.V."/>
            <person name="Feng J.-D."/>
            <person name="Fong B."/>
            <person name="Fujii C.Y."/>
            <person name="Gill J.E."/>
            <person name="Goldsmith A.D."/>
            <person name="Haas B."/>
            <person name="Hansen N.F."/>
            <person name="Hughes B."/>
            <person name="Huizar L."/>
            <person name="Hunter J.L."/>
            <person name="Jenkins J."/>
            <person name="Johnson-Hopson C."/>
            <person name="Khan S."/>
            <person name="Khaykin E."/>
            <person name="Kim C.J."/>
            <person name="Koo H.L."/>
            <person name="Kremenetskaia I."/>
            <person name="Kurtz D.B."/>
            <person name="Kwan A."/>
            <person name="Lam B."/>
            <person name="Langin-Hooper S."/>
            <person name="Lee A."/>
            <person name="Lee J.M."/>
            <person name="Lenz C.A."/>
            <person name="Li J.H."/>
            <person name="Li Y.-P."/>
            <person name="Lin X."/>
            <person name="Liu S.X."/>
            <person name="Liu Z.A."/>
            <person name="Luros J.S."/>
            <person name="Maiti R."/>
            <person name="Marziali A."/>
            <person name="Militscher J."/>
            <person name="Miranda M."/>
            <person name="Nguyen M."/>
            <person name="Nierman W.C."/>
            <person name="Osborne B.I."/>
            <person name="Pai G."/>
            <person name="Peterson J."/>
            <person name="Pham P.K."/>
            <person name="Rizzo M."/>
            <person name="Rooney T."/>
            <person name="Rowley D."/>
            <person name="Sakano H."/>
            <person name="Salzberg S.L."/>
            <person name="Schwartz J.R."/>
            <person name="Shinn P."/>
            <person name="Southwick A.M."/>
            <person name="Sun H."/>
            <person name="Tallon L.J."/>
            <person name="Tambunga G."/>
            <person name="Toriumi M.J."/>
            <person name="Town C.D."/>
            <person name="Utterback T."/>
            <person name="Van Aken S."/>
            <person name="Vaysberg M."/>
            <person name="Vysotskaia V.S."/>
            <person name="Walker M."/>
            <person name="Wu D."/>
            <person name="Yu G."/>
            <person name="Fraser C.M."/>
            <person name="Venter J.C."/>
            <person name="Davis R.W."/>
        </authorList>
    </citation>
    <scope>NUCLEOTIDE SEQUENCE [LARGE SCALE GENOMIC DNA] (AT1G33120 AND AT1G33140)</scope>
    <source>
        <strain>cv. Columbia</strain>
    </source>
</reference>
<reference key="3">
    <citation type="journal article" date="2017" name="Plant J.">
        <title>Araport11: a complete reannotation of the Arabidopsis thaliana reference genome.</title>
        <authorList>
            <person name="Cheng C.Y."/>
            <person name="Krishnakumar V."/>
            <person name="Chan A.P."/>
            <person name="Thibaud-Nissen F."/>
            <person name="Schobel S."/>
            <person name="Town C.D."/>
        </authorList>
    </citation>
    <scope>GENOME REANNOTATION</scope>
    <source>
        <strain>cv. Columbia</strain>
    </source>
</reference>
<reference key="4">
    <citation type="journal article" date="2003" name="Science">
        <title>Empirical analysis of transcriptional activity in the Arabidopsis genome.</title>
        <authorList>
            <person name="Yamada K."/>
            <person name="Lim J."/>
            <person name="Dale J.M."/>
            <person name="Chen H."/>
            <person name="Shinn P."/>
            <person name="Palm C.J."/>
            <person name="Southwick A.M."/>
            <person name="Wu H.C."/>
            <person name="Kim C.J."/>
            <person name="Nguyen M."/>
            <person name="Pham P.K."/>
            <person name="Cheuk R.F."/>
            <person name="Karlin-Newmann G."/>
            <person name="Liu S.X."/>
            <person name="Lam B."/>
            <person name="Sakano H."/>
            <person name="Wu T."/>
            <person name="Yu G."/>
            <person name="Miranda M."/>
            <person name="Quach H.L."/>
            <person name="Tripp M."/>
            <person name="Chang C.H."/>
            <person name="Lee J.M."/>
            <person name="Toriumi M.J."/>
            <person name="Chan M.M."/>
            <person name="Tang C.C."/>
            <person name="Onodera C.S."/>
            <person name="Deng J.M."/>
            <person name="Akiyama K."/>
            <person name="Ansari Y."/>
            <person name="Arakawa T."/>
            <person name="Banh J."/>
            <person name="Banno F."/>
            <person name="Bowser L."/>
            <person name="Brooks S.Y."/>
            <person name="Carninci P."/>
            <person name="Chao Q."/>
            <person name="Choy N."/>
            <person name="Enju A."/>
            <person name="Goldsmith A.D."/>
            <person name="Gurjal M."/>
            <person name="Hansen N.F."/>
            <person name="Hayashizaki Y."/>
            <person name="Johnson-Hopson C."/>
            <person name="Hsuan V.W."/>
            <person name="Iida K."/>
            <person name="Karnes M."/>
            <person name="Khan S."/>
            <person name="Koesema E."/>
            <person name="Ishida J."/>
            <person name="Jiang P.X."/>
            <person name="Jones T."/>
            <person name="Kawai J."/>
            <person name="Kamiya A."/>
            <person name="Meyers C."/>
            <person name="Nakajima M."/>
            <person name="Narusaka M."/>
            <person name="Seki M."/>
            <person name="Sakurai T."/>
            <person name="Satou M."/>
            <person name="Tamse R."/>
            <person name="Vaysberg M."/>
            <person name="Wallender E.K."/>
            <person name="Wong C."/>
            <person name="Yamamura Y."/>
            <person name="Yuan S."/>
            <person name="Shinozaki K."/>
            <person name="Davis R.W."/>
            <person name="Theologis A."/>
            <person name="Ecker J.R."/>
        </authorList>
    </citation>
    <scope>NUCLEOTIDE SEQUENCE [LARGE SCALE MRNA] (AT1G33120 AND AT1G33140)</scope>
    <source>
        <strain>cv. Columbia</strain>
    </source>
</reference>
<reference key="5">
    <citation type="journal article" date="1993" name="Plant J.">
        <title>An inventory of 1152 expressed sequence tags obtained by partial sequencing of cDNAs from Arabidopsis thaliana.</title>
        <authorList>
            <person name="Hoefte H."/>
            <person name="Desprez T."/>
            <person name="Amselem J."/>
            <person name="Chiapello H."/>
            <person name="Rouze P."/>
            <person name="Caboche M."/>
            <person name="Moisan A."/>
            <person name="Jourjon M.-F."/>
            <person name="Charpenteau J.-L."/>
            <person name="Berthomieu P."/>
            <person name="Guerrier D."/>
            <person name="Giraudat J."/>
            <person name="Quigley F."/>
            <person name="Thomas F."/>
            <person name="Yu D.-Y."/>
            <person name="Mache R."/>
            <person name="Raynal M."/>
            <person name="Cooke R."/>
            <person name="Grellet F."/>
            <person name="Delseny M."/>
            <person name="Parmentier Y."/>
            <person name="de Marcillac G."/>
            <person name="Gigot C."/>
            <person name="Fleck J."/>
            <person name="Philipps G."/>
            <person name="Axelos M."/>
            <person name="Bardet C."/>
            <person name="Tremousaygue D."/>
            <person name="Lescure B."/>
        </authorList>
    </citation>
    <scope>NUCLEOTIDE SEQUENCE [LARGE SCALE MRNA] OF 1-42 AND 150-195</scope>
    <source>
        <strain>cv. Columbia</strain>
        <tissue>Green siliques</tissue>
    </source>
</reference>
<reference key="6">
    <citation type="journal article" date="2001" name="Plant Physiol.">
        <title>The organization of cytoplasmic ribosomal protein genes in the Arabidopsis genome.</title>
        <authorList>
            <person name="Barakat A."/>
            <person name="Szick-Miranda K."/>
            <person name="Chang I.-F."/>
            <person name="Guyot R."/>
            <person name="Blanc G."/>
            <person name="Cooke R."/>
            <person name="Delseny M."/>
            <person name="Bailey-Serres J."/>
        </authorList>
    </citation>
    <scope>GENE FAMILY ORGANIZATION</scope>
    <scope>NOMENCLATURE</scope>
</reference>
<reference key="7">
    <citation type="journal article" date="2007" name="Mol. Cell. Proteomics">
        <title>Multidimensional protein identification technology (MudPIT) analysis of ubiquitinated proteins in plants.</title>
        <authorList>
            <person name="Maor R."/>
            <person name="Jones A."/>
            <person name="Nuehse T.S."/>
            <person name="Studholme D.J."/>
            <person name="Peck S.C."/>
            <person name="Shirasu K."/>
        </authorList>
    </citation>
    <scope>IDENTIFICATION BY MASS SPECTROMETRY [LARGE SCALE ANALYSIS]</scope>
    <source>
        <strain>cv. Landsberg erecta</strain>
    </source>
</reference>
<reference key="8">
    <citation type="journal article" date="2012" name="J. Proteome Res.">
        <title>Identification of phosphoproteins in Arabidopsis thaliana leaves using polyethylene glycol fractionation, immobilized metal-ion affinity chromatography, two-dimensional gel electrophoresis and mass spectrometry.</title>
        <authorList>
            <person name="Aryal U.K."/>
            <person name="Krochko J.E."/>
            <person name="Ross A.R."/>
        </authorList>
    </citation>
    <scope>PHOSPHORYLATION [LARGE SCALE ANALYSIS] AT THR-75</scope>
    <scope>IDENTIFICATION BY MASS SPECTROMETRY [LARGE SCALE ANALYSIS]</scope>
</reference>
<reference key="9">
    <citation type="journal article" date="2023" name="Plant Cell">
        <title>An updated nomenclature for plant ribosomal protein genes.</title>
        <authorList>
            <person name="Scarpin M.R."/>
            <person name="Busche M."/>
            <person name="Martinez R.E."/>
            <person name="Harper L.C."/>
            <person name="Reiser L."/>
            <person name="Szakonyi D."/>
            <person name="Merchante C."/>
            <person name="Lan T."/>
            <person name="Xiong W."/>
            <person name="Mo B."/>
            <person name="Tang G."/>
            <person name="Chen X."/>
            <person name="Bailey-Serres J."/>
            <person name="Browning K.S."/>
            <person name="Brunkard J.O."/>
        </authorList>
    </citation>
    <scope>NOMENCLATURE</scope>
</reference>
<proteinExistence type="evidence at protein level"/>
<organism>
    <name type="scientific">Arabidopsis thaliana</name>
    <name type="common">Mouse-ear cress</name>
    <dbReference type="NCBI Taxonomy" id="3702"/>
    <lineage>
        <taxon>Eukaryota</taxon>
        <taxon>Viridiplantae</taxon>
        <taxon>Streptophyta</taxon>
        <taxon>Embryophyta</taxon>
        <taxon>Tracheophyta</taxon>
        <taxon>Spermatophyta</taxon>
        <taxon>Magnoliopsida</taxon>
        <taxon>eudicotyledons</taxon>
        <taxon>Gunneridae</taxon>
        <taxon>Pentapetalae</taxon>
        <taxon>rosids</taxon>
        <taxon>malvids</taxon>
        <taxon>Brassicales</taxon>
        <taxon>Brassicaceae</taxon>
        <taxon>Camelineae</taxon>
        <taxon>Arabidopsis</taxon>
    </lineage>
</organism>
<keyword id="KW-0597">Phosphoprotein</keyword>
<keyword id="KW-1185">Reference proteome</keyword>
<keyword id="KW-0687">Ribonucleoprotein</keyword>
<keyword id="KW-0689">Ribosomal protein</keyword>
<dbReference type="EMBL" id="X91958">
    <property type="protein sequence ID" value="CAA63024.1"/>
    <property type="status" value="ALT_FRAME"/>
    <property type="molecule type" value="mRNA"/>
</dbReference>
<dbReference type="EMBL" id="AC021045">
    <property type="protein sequence ID" value="AAF97348.1"/>
    <property type="molecule type" value="Genomic_DNA"/>
</dbReference>
<dbReference type="EMBL" id="AC021045">
    <property type="protein sequence ID" value="AAF97345.1"/>
    <property type="molecule type" value="Genomic_DNA"/>
</dbReference>
<dbReference type="EMBL" id="CP002684">
    <property type="protein sequence ID" value="AEE31568.1"/>
    <property type="molecule type" value="Genomic_DNA"/>
</dbReference>
<dbReference type="EMBL" id="CP002684">
    <property type="protein sequence ID" value="AEE31569.1"/>
    <property type="molecule type" value="Genomic_DNA"/>
</dbReference>
<dbReference type="EMBL" id="AF324688">
    <property type="protein sequence ID" value="AAG40039.1"/>
    <property type="molecule type" value="mRNA"/>
</dbReference>
<dbReference type="EMBL" id="AF326873">
    <property type="protein sequence ID" value="AAG41455.1"/>
    <property type="molecule type" value="mRNA"/>
</dbReference>
<dbReference type="EMBL" id="AF339694">
    <property type="protein sequence ID" value="AAK00376.1"/>
    <property type="molecule type" value="mRNA"/>
</dbReference>
<dbReference type="EMBL" id="AF375419">
    <property type="protein sequence ID" value="AAK53003.1"/>
    <property type="molecule type" value="mRNA"/>
</dbReference>
<dbReference type="EMBL" id="AY039593">
    <property type="protein sequence ID" value="AAK62648.1"/>
    <property type="molecule type" value="mRNA"/>
</dbReference>
<dbReference type="EMBL" id="AY054156">
    <property type="protein sequence ID" value="AAL06817.1"/>
    <property type="molecule type" value="mRNA"/>
</dbReference>
<dbReference type="EMBL" id="AY058051">
    <property type="protein sequence ID" value="AAL24159.1"/>
    <property type="molecule type" value="mRNA"/>
</dbReference>
<dbReference type="EMBL" id="AY072446">
    <property type="protein sequence ID" value="AAL62438.1"/>
    <property type="molecule type" value="mRNA"/>
</dbReference>
<dbReference type="EMBL" id="AY128910">
    <property type="protein sequence ID" value="AAM91310.1"/>
    <property type="molecule type" value="mRNA"/>
</dbReference>
<dbReference type="EMBL" id="Z17727">
    <property type="protein sequence ID" value="CAA79045.1"/>
    <property type="molecule type" value="mRNA"/>
</dbReference>
<dbReference type="EMBL" id="Z17728">
    <property type="protein sequence ID" value="CAA79046.1"/>
    <property type="molecule type" value="mRNA"/>
</dbReference>
<dbReference type="PIR" id="F86455">
    <property type="entry name" value="F86455"/>
</dbReference>
<dbReference type="PIR" id="S71255">
    <property type="entry name" value="S71255"/>
</dbReference>
<dbReference type="RefSeq" id="NP_564417.1">
    <property type="nucleotide sequence ID" value="NM_103046.4"/>
</dbReference>
<dbReference type="RefSeq" id="NP_564418.1">
    <property type="nucleotide sequence ID" value="NM_103048.5"/>
</dbReference>
<dbReference type="SMR" id="P49209"/>
<dbReference type="BioGRID" id="25442">
    <property type="interactions" value="130"/>
</dbReference>
<dbReference type="BioGRID" id="25445">
    <property type="interactions" value="133"/>
</dbReference>
<dbReference type="FunCoup" id="P49209">
    <property type="interactions" value="2950"/>
</dbReference>
<dbReference type="IntAct" id="P49209">
    <property type="interactions" value="1"/>
</dbReference>
<dbReference type="STRING" id="3702.P49209"/>
<dbReference type="iPTMnet" id="P49209"/>
<dbReference type="PaxDb" id="3702-AT1G33120.1"/>
<dbReference type="ProteomicsDB" id="228081"/>
<dbReference type="EnsemblPlants" id="AT1G33120.1">
    <property type="protein sequence ID" value="AT1G33120.1"/>
    <property type="gene ID" value="AT1G33120"/>
</dbReference>
<dbReference type="EnsemblPlants" id="AT1G33140.1">
    <property type="protein sequence ID" value="AT1G33140.1"/>
    <property type="gene ID" value="AT1G33140"/>
</dbReference>
<dbReference type="GeneID" id="840208"/>
<dbReference type="GeneID" id="840211"/>
<dbReference type="Gramene" id="AT1G33120.1">
    <property type="protein sequence ID" value="AT1G33120.1"/>
    <property type="gene ID" value="AT1G33120"/>
</dbReference>
<dbReference type="Gramene" id="AT1G33140.1">
    <property type="protein sequence ID" value="AT1G33140.1"/>
    <property type="gene ID" value="AT1G33140"/>
</dbReference>
<dbReference type="KEGG" id="ath:AT1G33120"/>
<dbReference type="KEGG" id="ath:AT1G33140"/>
<dbReference type="Araport" id="AT1G33120"/>
<dbReference type="Araport" id="AT1G33140"/>
<dbReference type="TAIR" id="AT1G33120"/>
<dbReference type="TAIR" id="AT1G33140">
    <property type="gene designation" value="PGY2"/>
</dbReference>
<dbReference type="eggNOG" id="KOG3255">
    <property type="taxonomic scope" value="Eukaryota"/>
</dbReference>
<dbReference type="HOGENOM" id="CLU_065464_0_0_1"/>
<dbReference type="InParanoid" id="P49209"/>
<dbReference type="OMA" id="YAHFPMK"/>
<dbReference type="OrthoDB" id="1047848at2759"/>
<dbReference type="PhylomeDB" id="P49209"/>
<dbReference type="CD-CODE" id="4299E36E">
    <property type="entry name" value="Nucleolus"/>
</dbReference>
<dbReference type="PRO" id="PR:P49209"/>
<dbReference type="Proteomes" id="UP000006548">
    <property type="component" value="Chromosome 1"/>
</dbReference>
<dbReference type="ExpressionAtlas" id="P49209">
    <property type="expression patterns" value="baseline and differential"/>
</dbReference>
<dbReference type="GO" id="GO:0009941">
    <property type="term" value="C:chloroplast envelope"/>
    <property type="evidence" value="ECO:0007005"/>
    <property type="project" value="TAIR"/>
</dbReference>
<dbReference type="GO" id="GO:0022625">
    <property type="term" value="C:cytosolic large ribosomal subunit"/>
    <property type="evidence" value="ECO:0007005"/>
    <property type="project" value="TAIR"/>
</dbReference>
<dbReference type="GO" id="GO:0022626">
    <property type="term" value="C:cytosolic ribosome"/>
    <property type="evidence" value="ECO:0007005"/>
    <property type="project" value="TAIR"/>
</dbReference>
<dbReference type="GO" id="GO:0005730">
    <property type="term" value="C:nucleolus"/>
    <property type="evidence" value="ECO:0007005"/>
    <property type="project" value="TAIR"/>
</dbReference>
<dbReference type="GO" id="GO:0005634">
    <property type="term" value="C:nucleus"/>
    <property type="evidence" value="ECO:0007005"/>
    <property type="project" value="TAIR"/>
</dbReference>
<dbReference type="GO" id="GO:0000325">
    <property type="term" value="C:plant-type vacuole"/>
    <property type="evidence" value="ECO:0007005"/>
    <property type="project" value="TAIR"/>
</dbReference>
<dbReference type="GO" id="GO:0009506">
    <property type="term" value="C:plasmodesma"/>
    <property type="evidence" value="ECO:0007005"/>
    <property type="project" value="TAIR"/>
</dbReference>
<dbReference type="GO" id="GO:0005773">
    <property type="term" value="C:vacuole"/>
    <property type="evidence" value="ECO:0007005"/>
    <property type="project" value="TAIR"/>
</dbReference>
<dbReference type="GO" id="GO:0003729">
    <property type="term" value="F:mRNA binding"/>
    <property type="evidence" value="ECO:0000314"/>
    <property type="project" value="TAIR"/>
</dbReference>
<dbReference type="GO" id="GO:0019843">
    <property type="term" value="F:rRNA binding"/>
    <property type="evidence" value="ECO:0007669"/>
    <property type="project" value="InterPro"/>
</dbReference>
<dbReference type="GO" id="GO:0003735">
    <property type="term" value="F:structural constituent of ribosome"/>
    <property type="evidence" value="ECO:0000314"/>
    <property type="project" value="CAFA"/>
</dbReference>
<dbReference type="GO" id="GO:0006412">
    <property type="term" value="P:translation"/>
    <property type="evidence" value="ECO:0007669"/>
    <property type="project" value="InterPro"/>
</dbReference>
<dbReference type="FunFam" id="3.90.930.12:FF:000003">
    <property type="entry name" value="60S ribosomal protein L9"/>
    <property type="match status" value="1"/>
</dbReference>
<dbReference type="FunFam" id="3.90.930.12:FF:000004">
    <property type="entry name" value="60S ribosomal protein L9"/>
    <property type="match status" value="1"/>
</dbReference>
<dbReference type="Gene3D" id="3.90.930.12">
    <property type="entry name" value="Ribosomal protein L6, alpha-beta domain"/>
    <property type="match status" value="2"/>
</dbReference>
<dbReference type="InterPro" id="IPR000702">
    <property type="entry name" value="Ribosomal_uL6-like"/>
</dbReference>
<dbReference type="InterPro" id="IPR036789">
    <property type="entry name" value="Ribosomal_uL6-like_a/b-dom_sf"/>
</dbReference>
<dbReference type="InterPro" id="IPR020040">
    <property type="entry name" value="Ribosomal_uL6_a/b-dom"/>
</dbReference>
<dbReference type="InterPro" id="IPR002359">
    <property type="entry name" value="Ribosomal_uL6_CS2"/>
</dbReference>
<dbReference type="PANTHER" id="PTHR11655:SF16">
    <property type="entry name" value="60S RIBOSOMAL PROTEIN L9"/>
    <property type="match status" value="1"/>
</dbReference>
<dbReference type="PANTHER" id="PTHR11655">
    <property type="entry name" value="60S/50S RIBOSOMAL PROTEIN L6/L9"/>
    <property type="match status" value="1"/>
</dbReference>
<dbReference type="Pfam" id="PF00347">
    <property type="entry name" value="Ribosomal_L6"/>
    <property type="match status" value="2"/>
</dbReference>
<dbReference type="PIRSF" id="PIRSF002162">
    <property type="entry name" value="Ribosomal_L6"/>
    <property type="match status" value="1"/>
</dbReference>
<dbReference type="SUPFAM" id="SSF56053">
    <property type="entry name" value="Ribosomal protein L6"/>
    <property type="match status" value="2"/>
</dbReference>
<dbReference type="PROSITE" id="PS00700">
    <property type="entry name" value="RIBOSOMAL_L6_2"/>
    <property type="match status" value="1"/>
</dbReference>
<evidence type="ECO:0000303" key="1">
    <source>
    </source>
</evidence>
<evidence type="ECO:0000305" key="2"/>
<evidence type="ECO:0007744" key="3">
    <source>
    </source>
</evidence>
<protein>
    <recommendedName>
        <fullName evidence="1">Large ribosomal subunit protein uL6z/uL6y</fullName>
    </recommendedName>
    <alternativeName>
        <fullName>60S ribosomal protein L9-1</fullName>
    </alternativeName>
</protein>
<sequence length="194" mass="22018">MKTILSSETMDIPDSVTIKVHAKVIEVEGPRGKLVRDFKHLNLDFQLIKDPETGKKKLKIDSWFGTRKTSASIRTALSHVDNLISGVTRGFRYKMRFVYAHFPINASIGGDGKSIEIRNFLGEKKVRKVEMLDGVTIVRSEKVKDEIVLDGNDIELVSRSCALINQKCHVKKKDIRKFLDGIYVSEKSKIVEEE</sequence>
<comment type="similarity">
    <text evidence="2">Belongs to the universal ribosomal protein uL6 family.</text>
</comment>
<comment type="sequence caution" evidence="2">
    <conflict type="frameshift">
        <sequence resource="EMBL-CDS" id="CAA63024"/>
    </conflict>
</comment>
<gene>
    <name type="primary">RPL9B</name>
    <name type="ordered locus">At1g33120</name>
    <name type="ORF">T9L6.2</name>
</gene>
<gene>
    <name type="primary">RPL9C</name>
    <name type="ordered locus">At1g33140</name>
    <name type="ORF">T9L6.5</name>
</gene>
<name>RL91_ARATH</name>